<dbReference type="EC" id="2.1.1.-"/>
<dbReference type="EMBL" id="AL157769">
    <property type="status" value="NOT_ANNOTATED_CDS"/>
    <property type="molecule type" value="Genomic_DNA"/>
</dbReference>
<dbReference type="SMR" id="A6NDL7"/>
<dbReference type="FunCoup" id="A6NDL7">
    <property type="interactions" value="511"/>
</dbReference>
<dbReference type="GlyCosmos" id="A6NDL7">
    <property type="glycosylation" value="1 site, 1 glycan"/>
</dbReference>
<dbReference type="GlyGen" id="A6NDL7">
    <property type="glycosylation" value="1 site, 1 O-linked glycan (1 site)"/>
</dbReference>
<dbReference type="iPTMnet" id="A6NDL7"/>
<dbReference type="BioMuta" id="HGNC:41948"/>
<dbReference type="AGR" id="HGNC:41948"/>
<dbReference type="GeneCards" id="METTL21EP"/>
<dbReference type="HGNC" id="HGNC:41948">
    <property type="gene designation" value="METTL21EP"/>
</dbReference>
<dbReference type="neXtProt" id="NX_A6NDL7"/>
<dbReference type="InParanoid" id="A6NDL7"/>
<dbReference type="PAN-GO" id="A6NDL7">
    <property type="GO annotations" value="4 GO annotations based on evolutionary models"/>
</dbReference>
<dbReference type="PhylomeDB" id="A6NDL7"/>
<dbReference type="ChiTaRS" id="METTL21EP">
    <property type="organism name" value="human"/>
</dbReference>
<dbReference type="Pharos" id="A6NDL7">
    <property type="development level" value="Tdark"/>
</dbReference>
<dbReference type="Proteomes" id="UP000005640">
    <property type="component" value="Unplaced"/>
</dbReference>
<dbReference type="RNAct" id="A6NDL7">
    <property type="molecule type" value="protein"/>
</dbReference>
<dbReference type="GO" id="GO:0032991">
    <property type="term" value="C:protein-containing complex"/>
    <property type="evidence" value="ECO:0007669"/>
    <property type="project" value="UniProtKB-ARBA"/>
</dbReference>
<dbReference type="GO" id="GO:0008276">
    <property type="term" value="F:protein methyltransferase activity"/>
    <property type="evidence" value="ECO:0000318"/>
    <property type="project" value="GO_Central"/>
</dbReference>
<dbReference type="GO" id="GO:0032259">
    <property type="term" value="P:methylation"/>
    <property type="evidence" value="ECO:0007669"/>
    <property type="project" value="UniProtKB-KW"/>
</dbReference>
<dbReference type="CDD" id="cd02440">
    <property type="entry name" value="AdoMet_MTases"/>
    <property type="match status" value="1"/>
</dbReference>
<dbReference type="Gene3D" id="3.40.50.150">
    <property type="entry name" value="Vaccinia Virus protein VP39"/>
    <property type="match status" value="1"/>
</dbReference>
<dbReference type="InterPro" id="IPR019410">
    <property type="entry name" value="Methyltransf_16"/>
</dbReference>
<dbReference type="InterPro" id="IPR029063">
    <property type="entry name" value="SAM-dependent_MTases_sf"/>
</dbReference>
<dbReference type="PANTHER" id="PTHR14614">
    <property type="entry name" value="HEPATOCELLULAR CARCINOMA-ASSOCIATED ANTIGEN"/>
    <property type="match status" value="1"/>
</dbReference>
<dbReference type="PANTHER" id="PTHR14614:SF1">
    <property type="entry name" value="METHYLTRANSFERASE-LIKE PROTEIN 21E PSEUDOGENE-RELATED"/>
    <property type="match status" value="1"/>
</dbReference>
<dbReference type="Pfam" id="PF10294">
    <property type="entry name" value="Methyltransf_16"/>
    <property type="match status" value="1"/>
</dbReference>
<dbReference type="SUPFAM" id="SSF53335">
    <property type="entry name" value="S-adenosyl-L-methionine-dependent methyltransferases"/>
    <property type="match status" value="1"/>
</dbReference>
<name>MT21E_HUMAN</name>
<proteinExistence type="uncertain"/>
<keyword id="KW-0489">Methyltransferase</keyword>
<keyword id="KW-1185">Reference proteome</keyword>
<keyword id="KW-0949">S-adenosyl-L-methionine</keyword>
<keyword id="KW-0808">Transferase</keyword>
<reference key="1">
    <citation type="journal article" date="2004" name="Nature">
        <title>The DNA sequence and analysis of human chromosome 13.</title>
        <authorList>
            <person name="Dunham A."/>
            <person name="Matthews L.H."/>
            <person name="Burton J."/>
            <person name="Ashurst J.L."/>
            <person name="Howe K.L."/>
            <person name="Ashcroft K.J."/>
            <person name="Beare D.M."/>
            <person name="Burford D.C."/>
            <person name="Hunt S.E."/>
            <person name="Griffiths-Jones S."/>
            <person name="Jones M.C."/>
            <person name="Keenan S.J."/>
            <person name="Oliver K."/>
            <person name="Scott C.E."/>
            <person name="Ainscough R."/>
            <person name="Almeida J.P."/>
            <person name="Ambrose K.D."/>
            <person name="Andrews D.T."/>
            <person name="Ashwell R.I.S."/>
            <person name="Babbage A.K."/>
            <person name="Bagguley C.L."/>
            <person name="Bailey J."/>
            <person name="Bannerjee R."/>
            <person name="Barlow K.F."/>
            <person name="Bates K."/>
            <person name="Beasley H."/>
            <person name="Bird C.P."/>
            <person name="Bray-Allen S."/>
            <person name="Brown A.J."/>
            <person name="Brown J.Y."/>
            <person name="Burrill W."/>
            <person name="Carder C."/>
            <person name="Carter N.P."/>
            <person name="Chapman J.C."/>
            <person name="Clamp M.E."/>
            <person name="Clark S.Y."/>
            <person name="Clarke G."/>
            <person name="Clee C.M."/>
            <person name="Clegg S.C."/>
            <person name="Cobley V."/>
            <person name="Collins J.E."/>
            <person name="Corby N."/>
            <person name="Coville G.J."/>
            <person name="Deloukas P."/>
            <person name="Dhami P."/>
            <person name="Dunham I."/>
            <person name="Dunn M."/>
            <person name="Earthrowl M.E."/>
            <person name="Ellington A.G."/>
            <person name="Faulkner L."/>
            <person name="Frankish A.G."/>
            <person name="Frankland J."/>
            <person name="French L."/>
            <person name="Garner P."/>
            <person name="Garnett J."/>
            <person name="Gilbert J.G.R."/>
            <person name="Gilson C.J."/>
            <person name="Ghori J."/>
            <person name="Grafham D.V."/>
            <person name="Gribble S.M."/>
            <person name="Griffiths C."/>
            <person name="Hall R.E."/>
            <person name="Hammond S."/>
            <person name="Harley J.L."/>
            <person name="Hart E.A."/>
            <person name="Heath P.D."/>
            <person name="Howden P.J."/>
            <person name="Huckle E.J."/>
            <person name="Hunt P.J."/>
            <person name="Hunt A.R."/>
            <person name="Johnson C."/>
            <person name="Johnson D."/>
            <person name="Kay M."/>
            <person name="Kimberley A.M."/>
            <person name="King A."/>
            <person name="Laird G.K."/>
            <person name="Langford C.J."/>
            <person name="Lawlor S."/>
            <person name="Leongamornlert D.A."/>
            <person name="Lloyd D.M."/>
            <person name="Lloyd C."/>
            <person name="Loveland J.E."/>
            <person name="Lovell J."/>
            <person name="Martin S."/>
            <person name="Mashreghi-Mohammadi M."/>
            <person name="McLaren S.J."/>
            <person name="McMurray A."/>
            <person name="Milne S."/>
            <person name="Moore M.J.F."/>
            <person name="Nickerson T."/>
            <person name="Palmer S.A."/>
            <person name="Pearce A.V."/>
            <person name="Peck A.I."/>
            <person name="Pelan S."/>
            <person name="Phillimore B."/>
            <person name="Porter K.M."/>
            <person name="Rice C.M."/>
            <person name="Searle S."/>
            <person name="Sehra H.K."/>
            <person name="Shownkeen R."/>
            <person name="Skuce C.D."/>
            <person name="Smith M."/>
            <person name="Steward C.A."/>
            <person name="Sycamore N."/>
            <person name="Tester J."/>
            <person name="Thomas D.W."/>
            <person name="Tracey A."/>
            <person name="Tromans A."/>
            <person name="Tubby B."/>
            <person name="Wall M."/>
            <person name="Wallis J.M."/>
            <person name="West A.P."/>
            <person name="Whitehead S.L."/>
            <person name="Willey D.L."/>
            <person name="Wilming L."/>
            <person name="Wray P.W."/>
            <person name="Wright M.W."/>
            <person name="Young L."/>
            <person name="Coulson A."/>
            <person name="Durbin R.M."/>
            <person name="Hubbard T."/>
            <person name="Sulston J.E."/>
            <person name="Beck S."/>
            <person name="Bentley D.R."/>
            <person name="Rogers J."/>
            <person name="Ross M.T."/>
        </authorList>
    </citation>
    <scope>NUCLEOTIDE SEQUENCE [LARGE SCALE GENOMIC DNA]</scope>
</reference>
<comment type="function">
    <text evidence="1">Protein-lysine methyltransferase.</text>
</comment>
<comment type="similarity">
    <text evidence="2">Belongs to the methyltransferase superfamily. METTL21 family.</text>
</comment>
<comment type="caution">
    <text evidence="2">Could be the product of a pseudogene.</text>
</comment>
<organism>
    <name type="scientific">Homo sapiens</name>
    <name type="common">Human</name>
    <dbReference type="NCBI Taxonomy" id="9606"/>
    <lineage>
        <taxon>Eukaryota</taxon>
        <taxon>Metazoa</taxon>
        <taxon>Chordata</taxon>
        <taxon>Craniata</taxon>
        <taxon>Vertebrata</taxon>
        <taxon>Euteleostomi</taxon>
        <taxon>Mammalia</taxon>
        <taxon>Eutheria</taxon>
        <taxon>Euarchontoglires</taxon>
        <taxon>Primates</taxon>
        <taxon>Haplorrhini</taxon>
        <taxon>Catarrhini</taxon>
        <taxon>Hominidae</taxon>
        <taxon>Homo</taxon>
    </lineage>
</organism>
<evidence type="ECO:0000250" key="1"/>
<evidence type="ECO:0000305" key="2"/>
<protein>
    <recommendedName>
        <fullName>Putative methyltransferase-like protein 21E pseudogene</fullName>
        <ecNumber>2.1.1.-</ecNumber>
    </recommendedName>
</protein>
<gene>
    <name type="primary">METTL21EP</name>
    <name type="synonym">METTL21CP1</name>
</gene>
<sequence length="271" mass="31188">MIHFNLLETQLTPLASFQEIMKKTSIYHLPSFHYLMDSEAQEDTREAYDDKQVVTEIMARCFIPTLITTTSWESFHFIGHEIRITEAMDCYGAVVWPSALVLCYFLETNAKQYNMVDKNVIEIGAGTGLVSIVASLLGAHVTATDLPELLGNLQYNISRNTKMKSKHLPQVKELSWGVALDTNFPRSSNNFDYILAADVVYAHPFLEELLITFDHLCKETTIILWAMKFRLEKENKFVDRFKELFDLEEISSFPSLNIKLYKAVKKNRRSV</sequence>
<accession>A6NDL7</accession>
<feature type="chain" id="PRO_0000329291" description="Putative methyltransferase-like protein 21E pseudogene">
    <location>
        <begin position="1"/>
        <end position="271"/>
    </location>
</feature>
<feature type="binding site" evidence="1">
    <location>
        <position position="96"/>
    </location>
    <ligand>
        <name>S-adenosyl-L-methionine</name>
        <dbReference type="ChEBI" id="CHEBI:59789"/>
    </ligand>
</feature>
<feature type="binding site" evidence="1">
    <location>
        <begin position="124"/>
        <end position="126"/>
    </location>
    <ligand>
        <name>S-adenosyl-L-methionine</name>
        <dbReference type="ChEBI" id="CHEBI:59789"/>
    </ligand>
</feature>
<feature type="binding site" evidence="1">
    <location>
        <position position="145"/>
    </location>
    <ligand>
        <name>S-adenosyl-L-methionine</name>
        <dbReference type="ChEBI" id="CHEBI:59789"/>
    </ligand>
</feature>
<feature type="binding site" evidence="1">
    <location>
        <position position="176"/>
    </location>
    <ligand>
        <name>S-adenosyl-L-methionine</name>
        <dbReference type="ChEBI" id="CHEBI:59789"/>
    </ligand>
</feature>
<feature type="binding site" evidence="1">
    <location>
        <position position="197"/>
    </location>
    <ligand>
        <name>S-adenosyl-L-methionine</name>
        <dbReference type="ChEBI" id="CHEBI:59789"/>
    </ligand>
</feature>